<keyword id="KW-0002">3D-structure</keyword>
<keyword id="KW-0012">Acyltransferase</keyword>
<keyword id="KW-0028">Amino-acid biosynthesis</keyword>
<keyword id="KW-0963">Cytoplasm</keyword>
<keyword id="KW-0220">Diaminopimelate biosynthesis</keyword>
<keyword id="KW-0457">Lysine biosynthesis</keyword>
<keyword id="KW-1185">Reference proteome</keyword>
<keyword id="KW-0677">Repeat</keyword>
<keyword id="KW-0808">Transferase</keyword>
<dbReference type="EC" id="2.3.1.117"/>
<dbReference type="EMBL" id="AE005174">
    <property type="protein sequence ID" value="AAG54468.1"/>
    <property type="molecule type" value="Genomic_DNA"/>
</dbReference>
<dbReference type="EMBL" id="BA000007">
    <property type="protein sequence ID" value="BAB33591.1"/>
    <property type="molecule type" value="Genomic_DNA"/>
</dbReference>
<dbReference type="PIR" id="H85500">
    <property type="entry name" value="H85500"/>
</dbReference>
<dbReference type="PIR" id="H90649">
    <property type="entry name" value="H90649"/>
</dbReference>
<dbReference type="RefSeq" id="NP_308195.1">
    <property type="nucleotide sequence ID" value="NC_002695.1"/>
</dbReference>
<dbReference type="RefSeq" id="WP_001186649.1">
    <property type="nucleotide sequence ID" value="NZ_VOAI01000002.1"/>
</dbReference>
<dbReference type="PDB" id="3BXY">
    <property type="method" value="X-ray"/>
    <property type="resolution" value="2.00 A"/>
    <property type="chains" value="A=2-274"/>
</dbReference>
<dbReference type="PDBsum" id="3BXY"/>
<dbReference type="SMR" id="Q8X8Y7"/>
<dbReference type="STRING" id="155864.Z0176"/>
<dbReference type="GeneID" id="913832"/>
<dbReference type="KEGG" id="ece:Z0176"/>
<dbReference type="KEGG" id="ecs:ECs_0168"/>
<dbReference type="PATRIC" id="fig|386585.9.peg.269"/>
<dbReference type="eggNOG" id="COG2171">
    <property type="taxonomic scope" value="Bacteria"/>
</dbReference>
<dbReference type="HOGENOM" id="CLU_050859_0_1_6"/>
<dbReference type="OMA" id="YFPIQKM"/>
<dbReference type="BRENDA" id="2.3.1.117">
    <property type="organism ID" value="2026"/>
</dbReference>
<dbReference type="UniPathway" id="UPA00034">
    <property type="reaction ID" value="UER00019"/>
</dbReference>
<dbReference type="EvolutionaryTrace" id="Q8X8Y7"/>
<dbReference type="Proteomes" id="UP000000558">
    <property type="component" value="Chromosome"/>
</dbReference>
<dbReference type="Proteomes" id="UP000002519">
    <property type="component" value="Chromosome"/>
</dbReference>
<dbReference type="GO" id="GO:0005737">
    <property type="term" value="C:cytoplasm"/>
    <property type="evidence" value="ECO:0007669"/>
    <property type="project" value="UniProtKB-SubCell"/>
</dbReference>
<dbReference type="GO" id="GO:0008666">
    <property type="term" value="F:2,3,4,5-tetrahydropyridine-2,6-dicarboxylate N-succinyltransferase activity"/>
    <property type="evidence" value="ECO:0007669"/>
    <property type="project" value="UniProtKB-UniRule"/>
</dbReference>
<dbReference type="GO" id="GO:0016779">
    <property type="term" value="F:nucleotidyltransferase activity"/>
    <property type="evidence" value="ECO:0007669"/>
    <property type="project" value="TreeGrafter"/>
</dbReference>
<dbReference type="GO" id="GO:0019877">
    <property type="term" value="P:diaminopimelate biosynthetic process"/>
    <property type="evidence" value="ECO:0007669"/>
    <property type="project" value="UniProtKB-UniRule"/>
</dbReference>
<dbReference type="GO" id="GO:0009089">
    <property type="term" value="P:lysine biosynthetic process via diaminopimelate"/>
    <property type="evidence" value="ECO:0007669"/>
    <property type="project" value="UniProtKB-UniRule"/>
</dbReference>
<dbReference type="CDD" id="cd03350">
    <property type="entry name" value="LbH_THP_succinylT"/>
    <property type="match status" value="1"/>
</dbReference>
<dbReference type="FunFam" id="1.10.166.10:FF:000001">
    <property type="entry name" value="2,3,4,5-tetrahydropyridine-2,6-dicarboxylate N-succinyltransferase"/>
    <property type="match status" value="1"/>
</dbReference>
<dbReference type="FunFam" id="2.160.10.10:FF:000004">
    <property type="entry name" value="2,3,4,5-tetrahydropyridine-2,6-dicarboxylate N-succinyltransferase"/>
    <property type="match status" value="1"/>
</dbReference>
<dbReference type="Gene3D" id="2.160.10.10">
    <property type="entry name" value="Hexapeptide repeat proteins"/>
    <property type="match status" value="1"/>
</dbReference>
<dbReference type="Gene3D" id="1.10.166.10">
    <property type="entry name" value="Tetrahydrodipicolinate-N-succinyltransferase, N-terminal domain"/>
    <property type="match status" value="1"/>
</dbReference>
<dbReference type="HAMAP" id="MF_00811">
    <property type="entry name" value="DapD"/>
    <property type="match status" value="1"/>
</dbReference>
<dbReference type="InterPro" id="IPR005664">
    <property type="entry name" value="DapD_Trfase_Hexpep_rpt_fam"/>
</dbReference>
<dbReference type="InterPro" id="IPR001451">
    <property type="entry name" value="Hexapep"/>
</dbReference>
<dbReference type="InterPro" id="IPR018357">
    <property type="entry name" value="Hexapep_transf_CS"/>
</dbReference>
<dbReference type="InterPro" id="IPR023180">
    <property type="entry name" value="THP_succinylTrfase_dom1"/>
</dbReference>
<dbReference type="InterPro" id="IPR037133">
    <property type="entry name" value="THP_succinylTrfase_N_sf"/>
</dbReference>
<dbReference type="InterPro" id="IPR011004">
    <property type="entry name" value="Trimer_LpxA-like_sf"/>
</dbReference>
<dbReference type="NCBIfam" id="TIGR00965">
    <property type="entry name" value="dapD"/>
    <property type="match status" value="1"/>
</dbReference>
<dbReference type="NCBIfam" id="NF008808">
    <property type="entry name" value="PRK11830.1"/>
    <property type="match status" value="1"/>
</dbReference>
<dbReference type="PANTHER" id="PTHR19136:SF52">
    <property type="entry name" value="2,3,4,5-TETRAHYDROPYRIDINE-2,6-DICARBOXYLATE N-SUCCINYLTRANSFERASE"/>
    <property type="match status" value="1"/>
</dbReference>
<dbReference type="PANTHER" id="PTHR19136">
    <property type="entry name" value="MOLYBDENUM COFACTOR GUANYLYLTRANSFERASE"/>
    <property type="match status" value="1"/>
</dbReference>
<dbReference type="Pfam" id="PF14602">
    <property type="entry name" value="Hexapep_2"/>
    <property type="match status" value="1"/>
</dbReference>
<dbReference type="Pfam" id="PF14805">
    <property type="entry name" value="THDPS_N_2"/>
    <property type="match status" value="1"/>
</dbReference>
<dbReference type="SUPFAM" id="SSF51161">
    <property type="entry name" value="Trimeric LpxA-like enzymes"/>
    <property type="match status" value="1"/>
</dbReference>
<dbReference type="PROSITE" id="PS00101">
    <property type="entry name" value="HEXAPEP_TRANSFERASES"/>
    <property type="match status" value="1"/>
</dbReference>
<comment type="catalytic activity">
    <reaction>
        <text>(S)-2,3,4,5-tetrahydrodipicolinate + succinyl-CoA + H2O = (S)-2-succinylamino-6-oxoheptanedioate + CoA</text>
        <dbReference type="Rhea" id="RHEA:17325"/>
        <dbReference type="ChEBI" id="CHEBI:15377"/>
        <dbReference type="ChEBI" id="CHEBI:15685"/>
        <dbReference type="ChEBI" id="CHEBI:16845"/>
        <dbReference type="ChEBI" id="CHEBI:57287"/>
        <dbReference type="ChEBI" id="CHEBI:57292"/>
        <dbReference type="EC" id="2.3.1.117"/>
    </reaction>
</comment>
<comment type="pathway">
    <text>Amino-acid biosynthesis; L-lysine biosynthesis via DAP pathway; LL-2,6-diaminopimelate from (S)-tetrahydrodipicolinate (succinylase route): step 1/3.</text>
</comment>
<comment type="subunit">
    <text evidence="1">Homotrimer.</text>
</comment>
<comment type="subcellular location">
    <subcellularLocation>
        <location evidence="1">Cytoplasm</location>
    </subcellularLocation>
</comment>
<comment type="similarity">
    <text evidence="2">Belongs to the transferase hexapeptide repeat family.</text>
</comment>
<evidence type="ECO:0000250" key="1"/>
<evidence type="ECO:0000305" key="2"/>
<evidence type="ECO:0007829" key="3">
    <source>
        <dbReference type="PDB" id="3BXY"/>
    </source>
</evidence>
<gene>
    <name type="primary">dapD</name>
    <name type="ordered locus">Z0176</name>
    <name type="ordered locus">ECs0168</name>
</gene>
<proteinExistence type="evidence at protein level"/>
<reference key="1">
    <citation type="journal article" date="2001" name="Nature">
        <title>Genome sequence of enterohaemorrhagic Escherichia coli O157:H7.</title>
        <authorList>
            <person name="Perna N.T."/>
            <person name="Plunkett G. III"/>
            <person name="Burland V."/>
            <person name="Mau B."/>
            <person name="Glasner J.D."/>
            <person name="Rose D.J."/>
            <person name="Mayhew G.F."/>
            <person name="Evans P.S."/>
            <person name="Gregor J."/>
            <person name="Kirkpatrick H.A."/>
            <person name="Posfai G."/>
            <person name="Hackett J."/>
            <person name="Klink S."/>
            <person name="Boutin A."/>
            <person name="Shao Y."/>
            <person name="Miller L."/>
            <person name="Grotbeck E.J."/>
            <person name="Davis N.W."/>
            <person name="Lim A."/>
            <person name="Dimalanta E.T."/>
            <person name="Potamousis K."/>
            <person name="Apodaca J."/>
            <person name="Anantharaman T.S."/>
            <person name="Lin J."/>
            <person name="Yen G."/>
            <person name="Schwartz D.C."/>
            <person name="Welch R.A."/>
            <person name="Blattner F.R."/>
        </authorList>
    </citation>
    <scope>NUCLEOTIDE SEQUENCE [LARGE SCALE GENOMIC DNA]</scope>
    <source>
        <strain>O157:H7 / EDL933 / ATCC 700927 / EHEC</strain>
    </source>
</reference>
<reference key="2">
    <citation type="journal article" date="2001" name="DNA Res.">
        <title>Complete genome sequence of enterohemorrhagic Escherichia coli O157:H7 and genomic comparison with a laboratory strain K-12.</title>
        <authorList>
            <person name="Hayashi T."/>
            <person name="Makino K."/>
            <person name="Ohnishi M."/>
            <person name="Kurokawa K."/>
            <person name="Ishii K."/>
            <person name="Yokoyama K."/>
            <person name="Han C.-G."/>
            <person name="Ohtsubo E."/>
            <person name="Nakayama K."/>
            <person name="Murata T."/>
            <person name="Tanaka M."/>
            <person name="Tobe T."/>
            <person name="Iida T."/>
            <person name="Takami H."/>
            <person name="Honda T."/>
            <person name="Sasakawa C."/>
            <person name="Ogasawara N."/>
            <person name="Yasunaga T."/>
            <person name="Kuhara S."/>
            <person name="Shiba T."/>
            <person name="Hattori M."/>
            <person name="Shinagawa H."/>
        </authorList>
    </citation>
    <scope>NUCLEOTIDE SEQUENCE [LARGE SCALE GENOMIC DNA]</scope>
    <source>
        <strain>O157:H7 / Sakai / RIMD 0509952 / EHEC</strain>
    </source>
</reference>
<reference key="3">
    <citation type="journal article" date="2008" name="FEBS Lett.">
        <title>Structure of Escherichia coli tetrahydrodipicolinate N-succinyltransferase reveals the role of a conserved C-terminal helix in cooperative substrate binding.</title>
        <authorList>
            <person name="Nguyen L."/>
            <person name="Kozlov G."/>
            <person name="Gehring K."/>
        </authorList>
    </citation>
    <scope>X-RAY CRYSTALLOGRAPHY (2.0 ANGSTROMS)</scope>
</reference>
<sequence length="274" mass="29878">MQQLQNIIETAFERRAEITPANADTVTREAVNQVIALLDSGALRVAEKIDGQWVTHQWLKKAVLLSFRINDNQVIEGAESRYFDKVPMKFADYDEARFQKEGFRVVPPAAVRQGAFIARNTVLMPSYVNIGAYVDEGTMVDTWATVGSCAQIGKNVHLSGGVGIGGVLEPLQANPTIIEDNCFIGARSEVVEGVIVEEGSVISMGVYIGQSTRIYDRETGDIHYGRVPAGSVVVSGNLPSKDGKYSLYCAVIVKKVDAKTRGKVGINELLRTID</sequence>
<feature type="chain" id="PRO_0000196934" description="2,3,4,5-tetrahydropyridine-2,6-dicarboxylate N-succinyltransferase">
    <location>
        <begin position="1"/>
        <end position="274"/>
    </location>
</feature>
<feature type="binding site" evidence="1">
    <location>
        <position position="104"/>
    </location>
    <ligand>
        <name>substrate</name>
    </ligand>
</feature>
<feature type="binding site" evidence="1">
    <location>
        <position position="141"/>
    </location>
    <ligand>
        <name>substrate</name>
    </ligand>
</feature>
<feature type="helix" evidence="3">
    <location>
        <begin position="2"/>
        <end position="13"/>
    </location>
</feature>
<feature type="helix" evidence="3">
    <location>
        <begin position="14"/>
        <end position="17"/>
    </location>
</feature>
<feature type="turn" evidence="3">
    <location>
        <begin position="20"/>
        <end position="22"/>
    </location>
</feature>
<feature type="helix" evidence="3">
    <location>
        <begin position="25"/>
        <end position="39"/>
    </location>
</feature>
<feature type="strand" evidence="3">
    <location>
        <begin position="45"/>
        <end position="49"/>
    </location>
</feature>
<feature type="strand" evidence="3">
    <location>
        <begin position="52"/>
        <end position="55"/>
    </location>
</feature>
<feature type="helix" evidence="3">
    <location>
        <begin position="57"/>
        <end position="69"/>
    </location>
</feature>
<feature type="strand" evidence="3">
    <location>
        <begin position="73"/>
        <end position="76"/>
    </location>
</feature>
<feature type="strand" evidence="3">
    <location>
        <begin position="81"/>
        <end position="86"/>
    </location>
</feature>
<feature type="turn" evidence="3">
    <location>
        <begin position="89"/>
        <end position="92"/>
    </location>
</feature>
<feature type="helix" evidence="3">
    <location>
        <begin position="95"/>
        <end position="101"/>
    </location>
</feature>
<feature type="strand" evidence="3">
    <location>
        <begin position="110"/>
        <end position="112"/>
    </location>
</feature>
<feature type="strand" evidence="3">
    <location>
        <begin position="125"/>
        <end position="128"/>
    </location>
</feature>
<feature type="strand" evidence="3">
    <location>
        <begin position="144"/>
        <end position="146"/>
    </location>
</feature>
<feature type="strand" evidence="3">
    <location>
        <begin position="214"/>
        <end position="216"/>
    </location>
</feature>
<feature type="turn" evidence="3">
    <location>
        <begin position="217"/>
        <end position="219"/>
    </location>
</feature>
<feature type="strand" evidence="3">
    <location>
        <begin position="225"/>
        <end position="227"/>
    </location>
</feature>
<feature type="strand" evidence="3">
    <location>
        <begin position="231"/>
        <end position="239"/>
    </location>
</feature>
<feature type="strand" evidence="3">
    <location>
        <begin position="241"/>
        <end position="244"/>
    </location>
</feature>
<feature type="strand" evidence="3">
    <location>
        <begin position="246"/>
        <end position="255"/>
    </location>
</feature>
<feature type="helix" evidence="3">
    <location>
        <begin position="258"/>
        <end position="260"/>
    </location>
</feature>
<feature type="helix" evidence="3">
    <location>
        <begin position="266"/>
        <end position="271"/>
    </location>
</feature>
<protein>
    <recommendedName>
        <fullName>2,3,4,5-tetrahydropyridine-2,6-dicarboxylate N-succinyltransferase</fullName>
        <ecNumber>2.3.1.117</ecNumber>
    </recommendedName>
    <alternativeName>
        <fullName>Tetrahydrodipicolinate N-succinyltransferase</fullName>
        <shortName>THDP succinyltransferase</shortName>
        <shortName>THP succinyltransferase</shortName>
        <shortName>Tetrahydropicolinate succinylase</shortName>
    </alternativeName>
</protein>
<organism>
    <name type="scientific">Escherichia coli O157:H7</name>
    <dbReference type="NCBI Taxonomy" id="83334"/>
    <lineage>
        <taxon>Bacteria</taxon>
        <taxon>Pseudomonadati</taxon>
        <taxon>Pseudomonadota</taxon>
        <taxon>Gammaproteobacteria</taxon>
        <taxon>Enterobacterales</taxon>
        <taxon>Enterobacteriaceae</taxon>
        <taxon>Escherichia</taxon>
    </lineage>
</organism>
<accession>Q8X8Y7</accession>
<accession>Q7AHM1</accession>
<name>DAPD_ECO57</name>